<keyword id="KW-0963">Cytoplasm</keyword>
<keyword id="KW-0251">Elongation factor</keyword>
<keyword id="KW-0648">Protein biosynthesis</keyword>
<gene>
    <name evidence="1" type="primary">tsf</name>
    <name type="ordered locus">BURPS1106A_2492</name>
</gene>
<evidence type="ECO:0000255" key="1">
    <source>
        <dbReference type="HAMAP-Rule" id="MF_00050"/>
    </source>
</evidence>
<comment type="function">
    <text evidence="1">Associates with the EF-Tu.GDP complex and induces the exchange of GDP to GTP. It remains bound to the aminoacyl-tRNA.EF-Tu.GTP complex up to the GTP hydrolysis stage on the ribosome.</text>
</comment>
<comment type="subcellular location">
    <subcellularLocation>
        <location evidence="1">Cytoplasm</location>
    </subcellularLocation>
</comment>
<comment type="similarity">
    <text evidence="1">Belongs to the EF-Ts family.</text>
</comment>
<sequence length="293" mass="31193">MAAITASMVAELRAKTDAPMMECKKALTEADGDMAKAEELLRVKLGNKASKAASRVTAEGVVASFVGANAGALVELNCETDFVAKNDDFNAFAKTVAELVATQNPADVAALSALPLDGKTVDEVRLALVGKIGENISIRRFVRFETSNKLATYLHGSRIGVIVEYTGAQEQVGKDVAMHVAAMKPVSLSADEVPADLIEKERRVAEQKAAESGKPAEIVAKMVDGSVQKFLKEVSLLNQPFVKNDKQTIEQMLKAADAAVQKFALFVVGEGIEKRQDDFAAEVAAQVAAAKQQ</sequence>
<dbReference type="EMBL" id="CP000572">
    <property type="protein sequence ID" value="ABN89867.1"/>
    <property type="molecule type" value="Genomic_DNA"/>
</dbReference>
<dbReference type="RefSeq" id="WP_004197087.1">
    <property type="nucleotide sequence ID" value="NC_009076.1"/>
</dbReference>
<dbReference type="SMR" id="A3NWN0"/>
<dbReference type="GeneID" id="93060699"/>
<dbReference type="KEGG" id="bpl:BURPS1106A_2492"/>
<dbReference type="HOGENOM" id="CLU_047155_0_2_4"/>
<dbReference type="Proteomes" id="UP000006738">
    <property type="component" value="Chromosome I"/>
</dbReference>
<dbReference type="GO" id="GO:0005737">
    <property type="term" value="C:cytoplasm"/>
    <property type="evidence" value="ECO:0007669"/>
    <property type="project" value="UniProtKB-SubCell"/>
</dbReference>
<dbReference type="GO" id="GO:0003746">
    <property type="term" value="F:translation elongation factor activity"/>
    <property type="evidence" value="ECO:0007669"/>
    <property type="project" value="UniProtKB-UniRule"/>
</dbReference>
<dbReference type="CDD" id="cd14275">
    <property type="entry name" value="UBA_EF-Ts"/>
    <property type="match status" value="1"/>
</dbReference>
<dbReference type="FunFam" id="1.10.286.20:FF:000001">
    <property type="entry name" value="Elongation factor Ts"/>
    <property type="match status" value="1"/>
</dbReference>
<dbReference type="FunFam" id="1.10.8.10:FF:000001">
    <property type="entry name" value="Elongation factor Ts"/>
    <property type="match status" value="1"/>
</dbReference>
<dbReference type="Gene3D" id="1.10.286.20">
    <property type="match status" value="1"/>
</dbReference>
<dbReference type="Gene3D" id="1.10.8.10">
    <property type="entry name" value="DNA helicase RuvA subunit, C-terminal domain"/>
    <property type="match status" value="1"/>
</dbReference>
<dbReference type="Gene3D" id="3.30.479.20">
    <property type="entry name" value="Elongation factor Ts, dimerisation domain"/>
    <property type="match status" value="2"/>
</dbReference>
<dbReference type="HAMAP" id="MF_00050">
    <property type="entry name" value="EF_Ts"/>
    <property type="match status" value="1"/>
</dbReference>
<dbReference type="InterPro" id="IPR036402">
    <property type="entry name" value="EF-Ts_dimer_sf"/>
</dbReference>
<dbReference type="InterPro" id="IPR001816">
    <property type="entry name" value="Transl_elong_EFTs/EF1B"/>
</dbReference>
<dbReference type="InterPro" id="IPR014039">
    <property type="entry name" value="Transl_elong_EFTs/EF1B_dimer"/>
</dbReference>
<dbReference type="InterPro" id="IPR018101">
    <property type="entry name" value="Transl_elong_Ts_CS"/>
</dbReference>
<dbReference type="InterPro" id="IPR009060">
    <property type="entry name" value="UBA-like_sf"/>
</dbReference>
<dbReference type="NCBIfam" id="TIGR00116">
    <property type="entry name" value="tsf"/>
    <property type="match status" value="1"/>
</dbReference>
<dbReference type="PANTHER" id="PTHR11741">
    <property type="entry name" value="ELONGATION FACTOR TS"/>
    <property type="match status" value="1"/>
</dbReference>
<dbReference type="PANTHER" id="PTHR11741:SF0">
    <property type="entry name" value="ELONGATION FACTOR TS, MITOCHONDRIAL"/>
    <property type="match status" value="1"/>
</dbReference>
<dbReference type="Pfam" id="PF00889">
    <property type="entry name" value="EF_TS"/>
    <property type="match status" value="1"/>
</dbReference>
<dbReference type="SUPFAM" id="SSF54713">
    <property type="entry name" value="Elongation factor Ts (EF-Ts), dimerisation domain"/>
    <property type="match status" value="2"/>
</dbReference>
<dbReference type="SUPFAM" id="SSF46934">
    <property type="entry name" value="UBA-like"/>
    <property type="match status" value="1"/>
</dbReference>
<dbReference type="PROSITE" id="PS01127">
    <property type="entry name" value="EF_TS_2"/>
    <property type="match status" value="1"/>
</dbReference>
<accession>A3NWN0</accession>
<reference key="1">
    <citation type="journal article" date="2010" name="Genome Biol. Evol.">
        <title>Continuing evolution of Burkholderia mallei through genome reduction and large-scale rearrangements.</title>
        <authorList>
            <person name="Losada L."/>
            <person name="Ronning C.M."/>
            <person name="DeShazer D."/>
            <person name="Woods D."/>
            <person name="Fedorova N."/>
            <person name="Kim H.S."/>
            <person name="Shabalina S.A."/>
            <person name="Pearson T.R."/>
            <person name="Brinkac L."/>
            <person name="Tan P."/>
            <person name="Nandi T."/>
            <person name="Crabtree J."/>
            <person name="Badger J."/>
            <person name="Beckstrom-Sternberg S."/>
            <person name="Saqib M."/>
            <person name="Schutzer S.E."/>
            <person name="Keim P."/>
            <person name="Nierman W.C."/>
        </authorList>
    </citation>
    <scope>NUCLEOTIDE SEQUENCE [LARGE SCALE GENOMIC DNA]</scope>
    <source>
        <strain>1106a</strain>
    </source>
</reference>
<proteinExistence type="inferred from homology"/>
<protein>
    <recommendedName>
        <fullName evidence="1">Elongation factor Ts</fullName>
        <shortName evidence="1">EF-Ts</shortName>
    </recommendedName>
</protein>
<name>EFTS_BURP0</name>
<feature type="chain" id="PRO_1000006066" description="Elongation factor Ts">
    <location>
        <begin position="1"/>
        <end position="293"/>
    </location>
</feature>
<feature type="region of interest" description="Involved in Mg(2+) ion dislocation from EF-Tu" evidence="1">
    <location>
        <begin position="80"/>
        <end position="83"/>
    </location>
</feature>
<organism>
    <name type="scientific">Burkholderia pseudomallei (strain 1106a)</name>
    <dbReference type="NCBI Taxonomy" id="357348"/>
    <lineage>
        <taxon>Bacteria</taxon>
        <taxon>Pseudomonadati</taxon>
        <taxon>Pseudomonadota</taxon>
        <taxon>Betaproteobacteria</taxon>
        <taxon>Burkholderiales</taxon>
        <taxon>Burkholderiaceae</taxon>
        <taxon>Burkholderia</taxon>
        <taxon>pseudomallei group</taxon>
    </lineage>
</organism>